<keyword id="KW-0997">Cell inner membrane</keyword>
<keyword id="KW-1003">Cell membrane</keyword>
<keyword id="KW-0407">Ion channel</keyword>
<keyword id="KW-0406">Ion transport</keyword>
<keyword id="KW-0472">Membrane</keyword>
<keyword id="KW-0479">Metal-binding</keyword>
<keyword id="KW-1185">Reference proteome</keyword>
<keyword id="KW-0915">Sodium</keyword>
<keyword id="KW-0812">Transmembrane</keyword>
<keyword id="KW-1133">Transmembrane helix</keyword>
<keyword id="KW-0813">Transport</keyword>
<proteinExistence type="inferred from homology"/>
<accession>A4SW33</accession>
<sequence>MWLSILAIFCGAGLGALLRTGFNLLSVGVASVIPLGTLISNMVGGYLIGIALAFFGNNPHLSPEWKLLIITGFLGGLTTFSSFSAEVVTMIQRGEFTWALGTALLHLVGSLVLTLLGIWTYQAIK</sequence>
<comment type="function">
    <text evidence="1">Fluoride-specific ion channel. Important for reducing fluoride concentration in the cell, thus reducing its toxicity.</text>
</comment>
<comment type="catalytic activity">
    <reaction evidence="1">
        <text>fluoride(in) = fluoride(out)</text>
        <dbReference type="Rhea" id="RHEA:76159"/>
        <dbReference type="ChEBI" id="CHEBI:17051"/>
    </reaction>
    <physiologicalReaction direction="left-to-right" evidence="1">
        <dbReference type="Rhea" id="RHEA:76160"/>
    </physiologicalReaction>
</comment>
<comment type="activity regulation">
    <text evidence="1">Na(+) is not transported, but it plays an essential structural role and its presence is essential for fluoride channel function.</text>
</comment>
<comment type="subcellular location">
    <subcellularLocation>
        <location evidence="1">Cell inner membrane</location>
        <topology evidence="1">Multi-pass membrane protein</topology>
    </subcellularLocation>
</comment>
<comment type="similarity">
    <text evidence="1">Belongs to the fluoride channel Fluc/FEX (TC 1.A.43) family.</text>
</comment>
<protein>
    <recommendedName>
        <fullName evidence="1">Fluoride-specific ion channel FluC</fullName>
    </recommendedName>
</protein>
<dbReference type="EMBL" id="CP000655">
    <property type="protein sequence ID" value="ABP33697.1"/>
    <property type="molecule type" value="Genomic_DNA"/>
</dbReference>
<dbReference type="RefSeq" id="WP_011902322.1">
    <property type="nucleotide sequence ID" value="NC_009379.1"/>
</dbReference>
<dbReference type="SMR" id="A4SW33"/>
<dbReference type="GeneID" id="31480831"/>
<dbReference type="KEGG" id="pnu:Pnuc_0477"/>
<dbReference type="eggNOG" id="COG0239">
    <property type="taxonomic scope" value="Bacteria"/>
</dbReference>
<dbReference type="HOGENOM" id="CLU_114342_3_3_4"/>
<dbReference type="Proteomes" id="UP000000231">
    <property type="component" value="Chromosome"/>
</dbReference>
<dbReference type="GO" id="GO:0005886">
    <property type="term" value="C:plasma membrane"/>
    <property type="evidence" value="ECO:0007669"/>
    <property type="project" value="UniProtKB-SubCell"/>
</dbReference>
<dbReference type="GO" id="GO:0062054">
    <property type="term" value="F:fluoride channel activity"/>
    <property type="evidence" value="ECO:0007669"/>
    <property type="project" value="UniProtKB-UniRule"/>
</dbReference>
<dbReference type="GO" id="GO:0046872">
    <property type="term" value="F:metal ion binding"/>
    <property type="evidence" value="ECO:0007669"/>
    <property type="project" value="UniProtKB-KW"/>
</dbReference>
<dbReference type="GO" id="GO:0140114">
    <property type="term" value="P:cellular detoxification of fluoride"/>
    <property type="evidence" value="ECO:0007669"/>
    <property type="project" value="UniProtKB-UniRule"/>
</dbReference>
<dbReference type="HAMAP" id="MF_00454">
    <property type="entry name" value="FluC"/>
    <property type="match status" value="1"/>
</dbReference>
<dbReference type="InterPro" id="IPR003691">
    <property type="entry name" value="FluC"/>
</dbReference>
<dbReference type="NCBIfam" id="TIGR00494">
    <property type="entry name" value="crcB"/>
    <property type="match status" value="1"/>
</dbReference>
<dbReference type="NCBIfam" id="NF010792">
    <property type="entry name" value="PRK14196.1"/>
    <property type="match status" value="1"/>
</dbReference>
<dbReference type="PANTHER" id="PTHR28259">
    <property type="entry name" value="FLUORIDE EXPORT PROTEIN 1-RELATED"/>
    <property type="match status" value="1"/>
</dbReference>
<dbReference type="PANTHER" id="PTHR28259:SF1">
    <property type="entry name" value="FLUORIDE EXPORT PROTEIN 1-RELATED"/>
    <property type="match status" value="1"/>
</dbReference>
<dbReference type="Pfam" id="PF02537">
    <property type="entry name" value="CRCB"/>
    <property type="match status" value="1"/>
</dbReference>
<gene>
    <name evidence="1" type="primary">fluC</name>
    <name evidence="1" type="synonym">crcB</name>
    <name type="ordered locus">Pnuc_0477</name>
</gene>
<feature type="chain" id="PRO_1000206259" description="Fluoride-specific ion channel FluC">
    <location>
        <begin position="1"/>
        <end position="125"/>
    </location>
</feature>
<feature type="transmembrane region" description="Helical" evidence="1">
    <location>
        <begin position="2"/>
        <end position="22"/>
    </location>
</feature>
<feature type="transmembrane region" description="Helical" evidence="1">
    <location>
        <begin position="35"/>
        <end position="55"/>
    </location>
</feature>
<feature type="transmembrane region" description="Helical" evidence="1">
    <location>
        <begin position="68"/>
        <end position="88"/>
    </location>
</feature>
<feature type="transmembrane region" description="Helical" evidence="1">
    <location>
        <begin position="98"/>
        <end position="118"/>
    </location>
</feature>
<feature type="binding site" evidence="1">
    <location>
        <position position="75"/>
    </location>
    <ligand>
        <name>Na(+)</name>
        <dbReference type="ChEBI" id="CHEBI:29101"/>
        <note>structural</note>
    </ligand>
</feature>
<feature type="binding site" evidence="1">
    <location>
        <position position="78"/>
    </location>
    <ligand>
        <name>Na(+)</name>
        <dbReference type="ChEBI" id="CHEBI:29101"/>
        <note>structural</note>
    </ligand>
</feature>
<name>FLUC_POLAQ</name>
<organism>
    <name type="scientific">Polynucleobacter asymbioticus (strain DSM 18221 / CIP 109841 / QLW-P1DMWA-1)</name>
    <name type="common">Polynucleobacter necessarius subsp. asymbioticus</name>
    <dbReference type="NCBI Taxonomy" id="312153"/>
    <lineage>
        <taxon>Bacteria</taxon>
        <taxon>Pseudomonadati</taxon>
        <taxon>Pseudomonadota</taxon>
        <taxon>Betaproteobacteria</taxon>
        <taxon>Burkholderiales</taxon>
        <taxon>Burkholderiaceae</taxon>
        <taxon>Polynucleobacter</taxon>
    </lineage>
</organism>
<reference key="1">
    <citation type="journal article" date="2012" name="Stand. Genomic Sci.">
        <title>Complete genome sequence of Polynucleobacter necessarius subsp. asymbioticus type strain (QLW-P1DMWA-1(T)).</title>
        <authorList>
            <person name="Meincke L."/>
            <person name="Copeland A."/>
            <person name="Lapidus A."/>
            <person name="Lucas S."/>
            <person name="Berry K.W."/>
            <person name="Del Rio T.G."/>
            <person name="Hammon N."/>
            <person name="Dalin E."/>
            <person name="Tice H."/>
            <person name="Pitluck S."/>
            <person name="Richardson P."/>
            <person name="Bruce D."/>
            <person name="Goodwin L."/>
            <person name="Han C."/>
            <person name="Tapia R."/>
            <person name="Detter J.C."/>
            <person name="Schmutz J."/>
            <person name="Brettin T."/>
            <person name="Larimer F."/>
            <person name="Land M."/>
            <person name="Hauser L."/>
            <person name="Kyrpides N.C."/>
            <person name="Ivanova N."/>
            <person name="Goker M."/>
            <person name="Woyke T."/>
            <person name="Wu Q.L."/>
            <person name="Pockl M."/>
            <person name="Hahn M.W."/>
            <person name="Klenk H.P."/>
        </authorList>
    </citation>
    <scope>NUCLEOTIDE SEQUENCE [LARGE SCALE GENOMIC DNA]</scope>
    <source>
        <strain>DSM 18221 / CIP 109841 / QLW-P1DMWA-1</strain>
    </source>
</reference>
<evidence type="ECO:0000255" key="1">
    <source>
        <dbReference type="HAMAP-Rule" id="MF_00454"/>
    </source>
</evidence>